<name>LEUD_ACISJ</name>
<gene>
    <name evidence="1" type="primary">leuD</name>
    <name type="ordered locus">Ajs_3232</name>
</gene>
<feature type="chain" id="PRO_1000063722" description="3-isopropylmalate dehydratase small subunit">
    <location>
        <begin position="1"/>
        <end position="216"/>
    </location>
</feature>
<protein>
    <recommendedName>
        <fullName evidence="1">3-isopropylmalate dehydratase small subunit</fullName>
        <ecNumber evidence="1">4.2.1.33</ecNumber>
    </recommendedName>
    <alternativeName>
        <fullName evidence="1">Alpha-IPM isomerase</fullName>
        <shortName evidence="1">IPMI</shortName>
    </alternativeName>
    <alternativeName>
        <fullName evidence="1">Isopropylmalate isomerase</fullName>
    </alternativeName>
</protein>
<sequence length="216" mass="24383">MQKFTLHKGLVAPMDRENVDTDAIIPKQFLKSIKKTGFGPNLFDEWRYLDKGEPGVPESQRKPNPDFVLNQPRYQGASILLARKNFGCGSSREHAPWALDQYGFRAIIAPSFADIFFNNCFKNGLLPIVLPEATVDQLFNEAAAFPGYQLTVDLERQVVVRPQGEEIPFDVVPFRKYCLLNGFDDIGLTLRHADKIRAFEAARLASKPWLSHTMAA</sequence>
<reference key="1">
    <citation type="submission" date="2006-12" db="EMBL/GenBank/DDBJ databases">
        <title>Complete sequence of chromosome 1 of Acidovorax sp. JS42.</title>
        <authorList>
            <person name="Copeland A."/>
            <person name="Lucas S."/>
            <person name="Lapidus A."/>
            <person name="Barry K."/>
            <person name="Detter J.C."/>
            <person name="Glavina del Rio T."/>
            <person name="Dalin E."/>
            <person name="Tice H."/>
            <person name="Pitluck S."/>
            <person name="Chertkov O."/>
            <person name="Brettin T."/>
            <person name="Bruce D."/>
            <person name="Han C."/>
            <person name="Tapia R."/>
            <person name="Gilna P."/>
            <person name="Schmutz J."/>
            <person name="Larimer F."/>
            <person name="Land M."/>
            <person name="Hauser L."/>
            <person name="Kyrpides N."/>
            <person name="Kim E."/>
            <person name="Stahl D."/>
            <person name="Richardson P."/>
        </authorList>
    </citation>
    <scope>NUCLEOTIDE SEQUENCE [LARGE SCALE GENOMIC DNA]</scope>
    <source>
        <strain>JS42</strain>
    </source>
</reference>
<dbReference type="EC" id="4.2.1.33" evidence="1"/>
<dbReference type="EMBL" id="CP000539">
    <property type="protein sequence ID" value="ABM43355.1"/>
    <property type="molecule type" value="Genomic_DNA"/>
</dbReference>
<dbReference type="SMR" id="A1WAT0"/>
<dbReference type="STRING" id="232721.Ajs_3232"/>
<dbReference type="KEGG" id="ajs:Ajs_3232"/>
<dbReference type="eggNOG" id="COG0066">
    <property type="taxonomic scope" value="Bacteria"/>
</dbReference>
<dbReference type="HOGENOM" id="CLU_081378_0_3_4"/>
<dbReference type="UniPathway" id="UPA00048">
    <property type="reaction ID" value="UER00071"/>
</dbReference>
<dbReference type="Proteomes" id="UP000000645">
    <property type="component" value="Chromosome"/>
</dbReference>
<dbReference type="GO" id="GO:0009316">
    <property type="term" value="C:3-isopropylmalate dehydratase complex"/>
    <property type="evidence" value="ECO:0007669"/>
    <property type="project" value="InterPro"/>
</dbReference>
<dbReference type="GO" id="GO:0003861">
    <property type="term" value="F:3-isopropylmalate dehydratase activity"/>
    <property type="evidence" value="ECO:0007669"/>
    <property type="project" value="UniProtKB-UniRule"/>
</dbReference>
<dbReference type="GO" id="GO:0009098">
    <property type="term" value="P:L-leucine biosynthetic process"/>
    <property type="evidence" value="ECO:0007669"/>
    <property type="project" value="UniProtKB-UniRule"/>
</dbReference>
<dbReference type="CDD" id="cd01577">
    <property type="entry name" value="IPMI_Swivel"/>
    <property type="match status" value="1"/>
</dbReference>
<dbReference type="FunFam" id="3.20.19.10:FF:000003">
    <property type="entry name" value="3-isopropylmalate dehydratase small subunit"/>
    <property type="match status" value="1"/>
</dbReference>
<dbReference type="Gene3D" id="3.20.19.10">
    <property type="entry name" value="Aconitase, domain 4"/>
    <property type="match status" value="1"/>
</dbReference>
<dbReference type="HAMAP" id="MF_01031">
    <property type="entry name" value="LeuD_type1"/>
    <property type="match status" value="1"/>
</dbReference>
<dbReference type="InterPro" id="IPR004431">
    <property type="entry name" value="3-IsopropMal_deHydase_ssu"/>
</dbReference>
<dbReference type="InterPro" id="IPR015928">
    <property type="entry name" value="Aconitase/3IPM_dehydase_swvl"/>
</dbReference>
<dbReference type="InterPro" id="IPR000573">
    <property type="entry name" value="AconitaseA/IPMdHydase_ssu_swvl"/>
</dbReference>
<dbReference type="InterPro" id="IPR033940">
    <property type="entry name" value="IPMI_Swivel"/>
</dbReference>
<dbReference type="InterPro" id="IPR050075">
    <property type="entry name" value="LeuD"/>
</dbReference>
<dbReference type="NCBIfam" id="TIGR00171">
    <property type="entry name" value="leuD"/>
    <property type="match status" value="1"/>
</dbReference>
<dbReference type="NCBIfam" id="NF002458">
    <property type="entry name" value="PRK01641.1"/>
    <property type="match status" value="1"/>
</dbReference>
<dbReference type="PANTHER" id="PTHR43345:SF5">
    <property type="entry name" value="3-ISOPROPYLMALATE DEHYDRATASE SMALL SUBUNIT"/>
    <property type="match status" value="1"/>
</dbReference>
<dbReference type="PANTHER" id="PTHR43345">
    <property type="entry name" value="3-ISOPROPYLMALATE DEHYDRATASE SMALL SUBUNIT 2-RELATED-RELATED"/>
    <property type="match status" value="1"/>
</dbReference>
<dbReference type="Pfam" id="PF00694">
    <property type="entry name" value="Aconitase_C"/>
    <property type="match status" value="1"/>
</dbReference>
<dbReference type="SUPFAM" id="SSF52016">
    <property type="entry name" value="LeuD/IlvD-like"/>
    <property type="match status" value="1"/>
</dbReference>
<evidence type="ECO:0000255" key="1">
    <source>
        <dbReference type="HAMAP-Rule" id="MF_01031"/>
    </source>
</evidence>
<keyword id="KW-0028">Amino-acid biosynthesis</keyword>
<keyword id="KW-0100">Branched-chain amino acid biosynthesis</keyword>
<keyword id="KW-0432">Leucine biosynthesis</keyword>
<keyword id="KW-0456">Lyase</keyword>
<proteinExistence type="inferred from homology"/>
<organism>
    <name type="scientific">Acidovorax sp. (strain JS42)</name>
    <dbReference type="NCBI Taxonomy" id="232721"/>
    <lineage>
        <taxon>Bacteria</taxon>
        <taxon>Pseudomonadati</taxon>
        <taxon>Pseudomonadota</taxon>
        <taxon>Betaproteobacteria</taxon>
        <taxon>Burkholderiales</taxon>
        <taxon>Comamonadaceae</taxon>
        <taxon>Acidovorax</taxon>
    </lineage>
</organism>
<accession>A1WAT0</accession>
<comment type="function">
    <text evidence="1">Catalyzes the isomerization between 2-isopropylmalate and 3-isopropylmalate, via the formation of 2-isopropylmaleate.</text>
</comment>
<comment type="catalytic activity">
    <reaction evidence="1">
        <text>(2R,3S)-3-isopropylmalate = (2S)-2-isopropylmalate</text>
        <dbReference type="Rhea" id="RHEA:32287"/>
        <dbReference type="ChEBI" id="CHEBI:1178"/>
        <dbReference type="ChEBI" id="CHEBI:35121"/>
        <dbReference type="EC" id="4.2.1.33"/>
    </reaction>
</comment>
<comment type="pathway">
    <text evidence="1">Amino-acid biosynthesis; L-leucine biosynthesis; L-leucine from 3-methyl-2-oxobutanoate: step 2/4.</text>
</comment>
<comment type="subunit">
    <text evidence="1">Heterodimer of LeuC and LeuD.</text>
</comment>
<comment type="similarity">
    <text evidence="1">Belongs to the LeuD family. LeuD type 1 subfamily.</text>
</comment>